<name>GALF_ECO57</name>
<proteinExistence type="inferred from homology"/>
<accession>P0AAB7</accession>
<accession>P71245</accession>
<accession>P78083</accession>
<accession>P97192</accession>
<keyword id="KW-0448">Lipopolysaccharide biosynthesis</keyword>
<keyword id="KW-0548">Nucleotidyltransferase</keyword>
<keyword id="KW-1185">Reference proteome</keyword>
<keyword id="KW-0808">Transferase</keyword>
<protein>
    <recommendedName>
        <fullName>UTP--glucose-1-phosphate uridylyltransferase</fullName>
        <ecNumber>2.7.7.9</ecNumber>
    </recommendedName>
    <alternativeName>
        <fullName>Alpha-D-glucosyl-1-phosphate uridylyltransferase</fullName>
    </alternativeName>
    <alternativeName>
        <fullName>UDP-glucose pyrophosphorylase</fullName>
        <shortName>UDPGP</shortName>
    </alternativeName>
    <alternativeName>
        <fullName>Uridine diphosphoglucose pyrophosphorylase</fullName>
    </alternativeName>
</protein>
<gene>
    <name type="primary">galF</name>
    <name type="synonym">wcaN</name>
    <name type="ordered locus">Z3205</name>
    <name type="ordered locus">ECs2846</name>
</gene>
<feature type="chain" id="PRO_0000201350" description="UTP--glucose-1-phosphate uridylyltransferase">
    <location>
        <begin position="1"/>
        <end position="297"/>
    </location>
</feature>
<sequence>MTNLKAVIPVAGLGMHMLPATKAIPKEMLPIVDKPMIQYIVDEIVAAGIKEILLVTHASKNAVENHFDTSYELESLLEQRVKRQLLAEVQSICPPGVTIMNVRQGEPLGLGHSILCARPAIGDNPFVVVLPDVVIDDASADPLRYNLAAMIARFNETGRSQVLAKRMPGDLSEYSVIQTKEPLDREGKVSRIVEFIEKPDQPQTLDSDIMAVGRYVLSADIWPELERTQPGAWGRIQLTDAIAELAKKQSVDAMLMTGDSYDCGKKMGYMQAFVKYGLRNLKEGAKFRKGIEKLLSE</sequence>
<reference key="1">
    <citation type="journal article" date="2001" name="Nature">
        <title>Genome sequence of enterohaemorrhagic Escherichia coli O157:H7.</title>
        <authorList>
            <person name="Perna N.T."/>
            <person name="Plunkett G. III"/>
            <person name="Burland V."/>
            <person name="Mau B."/>
            <person name="Glasner J.D."/>
            <person name="Rose D.J."/>
            <person name="Mayhew G.F."/>
            <person name="Evans P.S."/>
            <person name="Gregor J."/>
            <person name="Kirkpatrick H.A."/>
            <person name="Posfai G."/>
            <person name="Hackett J."/>
            <person name="Klink S."/>
            <person name="Boutin A."/>
            <person name="Shao Y."/>
            <person name="Miller L."/>
            <person name="Grotbeck E.J."/>
            <person name="Davis N.W."/>
            <person name="Lim A."/>
            <person name="Dimalanta E.T."/>
            <person name="Potamousis K."/>
            <person name="Apodaca J."/>
            <person name="Anantharaman T.S."/>
            <person name="Lin J."/>
            <person name="Yen G."/>
            <person name="Schwartz D.C."/>
            <person name="Welch R.A."/>
            <person name="Blattner F.R."/>
        </authorList>
    </citation>
    <scope>NUCLEOTIDE SEQUENCE [LARGE SCALE GENOMIC DNA]</scope>
    <source>
        <strain>O157:H7 / EDL933 / ATCC 700927 / EHEC</strain>
    </source>
</reference>
<reference key="2">
    <citation type="journal article" date="2001" name="DNA Res.">
        <title>Complete genome sequence of enterohemorrhagic Escherichia coli O157:H7 and genomic comparison with a laboratory strain K-12.</title>
        <authorList>
            <person name="Hayashi T."/>
            <person name="Makino K."/>
            <person name="Ohnishi M."/>
            <person name="Kurokawa K."/>
            <person name="Ishii K."/>
            <person name="Yokoyama K."/>
            <person name="Han C.-G."/>
            <person name="Ohtsubo E."/>
            <person name="Nakayama K."/>
            <person name="Murata T."/>
            <person name="Tanaka M."/>
            <person name="Tobe T."/>
            <person name="Iida T."/>
            <person name="Takami H."/>
            <person name="Honda T."/>
            <person name="Sasakawa C."/>
            <person name="Ogasawara N."/>
            <person name="Yasunaga T."/>
            <person name="Kuhara S."/>
            <person name="Shiba T."/>
            <person name="Hattori M."/>
            <person name="Shinagawa H."/>
        </authorList>
    </citation>
    <scope>NUCLEOTIDE SEQUENCE [LARGE SCALE GENOMIC DNA]</scope>
    <source>
        <strain>O157:H7 / Sakai / RIMD 0509952 / EHEC</strain>
    </source>
</reference>
<evidence type="ECO:0000305" key="1"/>
<dbReference type="EC" id="2.7.7.9"/>
<dbReference type="EMBL" id="AE005174">
    <property type="protein sequence ID" value="AAG57101.1"/>
    <property type="molecule type" value="Genomic_DNA"/>
</dbReference>
<dbReference type="EMBL" id="BA000007">
    <property type="protein sequence ID" value="BAB36269.1"/>
    <property type="molecule type" value="Genomic_DNA"/>
</dbReference>
<dbReference type="PIR" id="A85830">
    <property type="entry name" value="A85830"/>
</dbReference>
<dbReference type="PIR" id="F90984">
    <property type="entry name" value="F90984"/>
</dbReference>
<dbReference type="RefSeq" id="NP_310873.1">
    <property type="nucleotide sequence ID" value="NC_002695.1"/>
</dbReference>
<dbReference type="RefSeq" id="WP_000183060.1">
    <property type="nucleotide sequence ID" value="NZ_VOAI01000013.1"/>
</dbReference>
<dbReference type="SMR" id="P0AAB7"/>
<dbReference type="STRING" id="155864.Z3205"/>
<dbReference type="GeneID" id="86946998"/>
<dbReference type="GeneID" id="914113"/>
<dbReference type="KEGG" id="ece:Z3205"/>
<dbReference type="KEGG" id="ecs:ECs_2846"/>
<dbReference type="PATRIC" id="fig|386585.9.peg.2979"/>
<dbReference type="eggNOG" id="COG1210">
    <property type="taxonomic scope" value="Bacteria"/>
</dbReference>
<dbReference type="HOGENOM" id="CLU_029499_1_1_6"/>
<dbReference type="OMA" id="MHYVRQG"/>
<dbReference type="UniPathway" id="UPA00030"/>
<dbReference type="UniPathway" id="UPA00215"/>
<dbReference type="Proteomes" id="UP000000558">
    <property type="component" value="Chromosome"/>
</dbReference>
<dbReference type="Proteomes" id="UP000002519">
    <property type="component" value="Chromosome"/>
</dbReference>
<dbReference type="GO" id="GO:0030234">
    <property type="term" value="F:enzyme regulator activity"/>
    <property type="evidence" value="ECO:0007669"/>
    <property type="project" value="InterPro"/>
</dbReference>
<dbReference type="GO" id="GO:0003983">
    <property type="term" value="F:UTP:glucose-1-phosphate uridylyltransferase activity"/>
    <property type="evidence" value="ECO:0007669"/>
    <property type="project" value="UniProtKB-EC"/>
</dbReference>
<dbReference type="GO" id="GO:0009103">
    <property type="term" value="P:lipopolysaccharide biosynthetic process"/>
    <property type="evidence" value="ECO:0007669"/>
    <property type="project" value="UniProtKB-UniPathway"/>
</dbReference>
<dbReference type="GO" id="GO:0006011">
    <property type="term" value="P:UDP-alpha-D-glucose metabolic process"/>
    <property type="evidence" value="ECO:0007669"/>
    <property type="project" value="InterPro"/>
</dbReference>
<dbReference type="CDD" id="cd02541">
    <property type="entry name" value="UGPase_prokaryotic"/>
    <property type="match status" value="1"/>
</dbReference>
<dbReference type="FunFam" id="3.90.550.10:FF:000008">
    <property type="entry name" value="UTP--glucose-1-phosphate uridylyltransferase"/>
    <property type="match status" value="1"/>
</dbReference>
<dbReference type="Gene3D" id="3.90.550.10">
    <property type="entry name" value="Spore Coat Polysaccharide Biosynthesis Protein SpsA, Chain A"/>
    <property type="match status" value="1"/>
</dbReference>
<dbReference type="InterPro" id="IPR005774">
    <property type="entry name" value="GalF"/>
</dbReference>
<dbReference type="InterPro" id="IPR005771">
    <property type="entry name" value="GalU_uridylyltTrfase_bac/arc"/>
</dbReference>
<dbReference type="InterPro" id="IPR005835">
    <property type="entry name" value="NTP_transferase_dom"/>
</dbReference>
<dbReference type="InterPro" id="IPR029044">
    <property type="entry name" value="Nucleotide-diphossugar_trans"/>
</dbReference>
<dbReference type="NCBIfam" id="TIGR01105">
    <property type="entry name" value="galF"/>
    <property type="match status" value="1"/>
</dbReference>
<dbReference type="NCBIfam" id="NF007516">
    <property type="entry name" value="PRK10122.1"/>
    <property type="match status" value="1"/>
</dbReference>
<dbReference type="PANTHER" id="PTHR43197">
    <property type="entry name" value="UTP--GLUCOSE-1-PHOSPHATE URIDYLYLTRANSFERASE"/>
    <property type="match status" value="1"/>
</dbReference>
<dbReference type="PANTHER" id="PTHR43197:SF2">
    <property type="entry name" value="UTP--GLUCOSE-1-PHOSPHATE URIDYLYLTRANSFERASE"/>
    <property type="match status" value="1"/>
</dbReference>
<dbReference type="Pfam" id="PF00483">
    <property type="entry name" value="NTP_transferase"/>
    <property type="match status" value="1"/>
</dbReference>
<dbReference type="SUPFAM" id="SSF53448">
    <property type="entry name" value="Nucleotide-diphospho-sugar transferases"/>
    <property type="match status" value="1"/>
</dbReference>
<organism>
    <name type="scientific">Escherichia coli O157:H7</name>
    <dbReference type="NCBI Taxonomy" id="83334"/>
    <lineage>
        <taxon>Bacteria</taxon>
        <taxon>Pseudomonadati</taxon>
        <taxon>Pseudomonadota</taxon>
        <taxon>Gammaproteobacteria</taxon>
        <taxon>Enterobacterales</taxon>
        <taxon>Enterobacteriaceae</taxon>
        <taxon>Escherichia</taxon>
    </lineage>
</organism>
<comment type="catalytic activity">
    <reaction>
        <text>alpha-D-glucose 1-phosphate + UTP + H(+) = UDP-alpha-D-glucose + diphosphate</text>
        <dbReference type="Rhea" id="RHEA:19889"/>
        <dbReference type="ChEBI" id="CHEBI:15378"/>
        <dbReference type="ChEBI" id="CHEBI:33019"/>
        <dbReference type="ChEBI" id="CHEBI:46398"/>
        <dbReference type="ChEBI" id="CHEBI:58601"/>
        <dbReference type="ChEBI" id="CHEBI:58885"/>
        <dbReference type="EC" id="2.7.7.9"/>
    </reaction>
</comment>
<comment type="pathway">
    <text>Carbohydrate metabolism; nucleotide-sugar metabolism.</text>
</comment>
<comment type="pathway">
    <text>Bacterial outer membrane biogenesis; lipopolysaccharide biosynthesis.</text>
</comment>
<comment type="similarity">
    <text evidence="1">Belongs to the UDPGP type 2 family.</text>
</comment>